<gene>
    <name evidence="1" type="primary">acpH</name>
    <name type="ordered locus">ECIAI39_0277</name>
</gene>
<protein>
    <recommendedName>
        <fullName evidence="1">Acyl carrier protein phosphodiesterase</fullName>
        <shortName evidence="1">ACP phosphodiesterase</shortName>
        <ecNumber evidence="1">3.1.4.14</ecNumber>
    </recommendedName>
</protein>
<accession>B7NJ98</accession>
<name>ACPH_ECO7I</name>
<organism>
    <name type="scientific">Escherichia coli O7:K1 (strain IAI39 / ExPEC)</name>
    <dbReference type="NCBI Taxonomy" id="585057"/>
    <lineage>
        <taxon>Bacteria</taxon>
        <taxon>Pseudomonadati</taxon>
        <taxon>Pseudomonadota</taxon>
        <taxon>Gammaproteobacteria</taxon>
        <taxon>Enterobacterales</taxon>
        <taxon>Enterobacteriaceae</taxon>
        <taxon>Escherichia</taxon>
    </lineage>
</organism>
<feature type="chain" id="PRO_1000188801" description="Acyl carrier protein phosphodiesterase">
    <location>
        <begin position="1"/>
        <end position="193"/>
    </location>
</feature>
<proteinExistence type="inferred from homology"/>
<sequence>MNFLAHLHLAHLAESSLSGNLLADFVRGNPEESFPPDVVAGIHMHRRIDVLTDNLPEVREAREWFRSETRRVAPITLDVMWDHFLSRHWSQLSPDFPLQEFVCYAREQVMTILPDSPPRFINLNNYLWSEQWLVRYRDMDFIQNVLNGMASRRPRLDALRDSWYDLDAHYDALETRFWQFYPRMMAQASRKAL</sequence>
<reference key="1">
    <citation type="journal article" date="2009" name="PLoS Genet.">
        <title>Organised genome dynamics in the Escherichia coli species results in highly diverse adaptive paths.</title>
        <authorList>
            <person name="Touchon M."/>
            <person name="Hoede C."/>
            <person name="Tenaillon O."/>
            <person name="Barbe V."/>
            <person name="Baeriswyl S."/>
            <person name="Bidet P."/>
            <person name="Bingen E."/>
            <person name="Bonacorsi S."/>
            <person name="Bouchier C."/>
            <person name="Bouvet O."/>
            <person name="Calteau A."/>
            <person name="Chiapello H."/>
            <person name="Clermont O."/>
            <person name="Cruveiller S."/>
            <person name="Danchin A."/>
            <person name="Diard M."/>
            <person name="Dossat C."/>
            <person name="Karoui M.E."/>
            <person name="Frapy E."/>
            <person name="Garry L."/>
            <person name="Ghigo J.M."/>
            <person name="Gilles A.M."/>
            <person name="Johnson J."/>
            <person name="Le Bouguenec C."/>
            <person name="Lescat M."/>
            <person name="Mangenot S."/>
            <person name="Martinez-Jehanne V."/>
            <person name="Matic I."/>
            <person name="Nassif X."/>
            <person name="Oztas S."/>
            <person name="Petit M.A."/>
            <person name="Pichon C."/>
            <person name="Rouy Z."/>
            <person name="Ruf C.S."/>
            <person name="Schneider D."/>
            <person name="Tourret J."/>
            <person name="Vacherie B."/>
            <person name="Vallenet D."/>
            <person name="Medigue C."/>
            <person name="Rocha E.P.C."/>
            <person name="Denamur E."/>
        </authorList>
    </citation>
    <scope>NUCLEOTIDE SEQUENCE [LARGE SCALE GENOMIC DNA]</scope>
    <source>
        <strain>IAI39 / ExPEC</strain>
    </source>
</reference>
<keyword id="KW-0275">Fatty acid biosynthesis</keyword>
<keyword id="KW-0276">Fatty acid metabolism</keyword>
<keyword id="KW-0378">Hydrolase</keyword>
<keyword id="KW-0444">Lipid biosynthesis</keyword>
<keyword id="KW-0443">Lipid metabolism</keyword>
<evidence type="ECO:0000255" key="1">
    <source>
        <dbReference type="HAMAP-Rule" id="MF_01950"/>
    </source>
</evidence>
<comment type="function">
    <text evidence="1">Converts holo-ACP to apo-ACP by hydrolytic cleavage of the phosphopantetheine prosthetic group from ACP.</text>
</comment>
<comment type="catalytic activity">
    <reaction evidence="1">
        <text>holo-[ACP] + H2O = apo-[ACP] + (R)-4'-phosphopantetheine + H(+)</text>
        <dbReference type="Rhea" id="RHEA:20537"/>
        <dbReference type="Rhea" id="RHEA-COMP:9685"/>
        <dbReference type="Rhea" id="RHEA-COMP:9690"/>
        <dbReference type="ChEBI" id="CHEBI:15377"/>
        <dbReference type="ChEBI" id="CHEBI:15378"/>
        <dbReference type="ChEBI" id="CHEBI:29999"/>
        <dbReference type="ChEBI" id="CHEBI:61723"/>
        <dbReference type="ChEBI" id="CHEBI:64479"/>
        <dbReference type="EC" id="3.1.4.14"/>
    </reaction>
</comment>
<comment type="similarity">
    <text evidence="1">Belongs to the AcpH family.</text>
</comment>
<dbReference type="EC" id="3.1.4.14" evidence="1"/>
<dbReference type="EMBL" id="CU928164">
    <property type="protein sequence ID" value="CAR16417.1"/>
    <property type="molecule type" value="Genomic_DNA"/>
</dbReference>
<dbReference type="RefSeq" id="WP_001009885.1">
    <property type="nucleotide sequence ID" value="NC_011750.1"/>
</dbReference>
<dbReference type="RefSeq" id="YP_002406320.1">
    <property type="nucleotide sequence ID" value="NC_011750.1"/>
</dbReference>
<dbReference type="SMR" id="B7NJ98"/>
<dbReference type="STRING" id="585057.ECIAI39_0277"/>
<dbReference type="KEGG" id="ect:ECIAI39_0277"/>
<dbReference type="PATRIC" id="fig|585057.6.peg.299"/>
<dbReference type="HOGENOM" id="CLU_099370_1_0_6"/>
<dbReference type="Proteomes" id="UP000000749">
    <property type="component" value="Chromosome"/>
</dbReference>
<dbReference type="GO" id="GO:0008770">
    <property type="term" value="F:[acyl-carrier-protein] phosphodiesterase activity"/>
    <property type="evidence" value="ECO:0007669"/>
    <property type="project" value="UniProtKB-UniRule"/>
</dbReference>
<dbReference type="GO" id="GO:0006633">
    <property type="term" value="P:fatty acid biosynthetic process"/>
    <property type="evidence" value="ECO:0007669"/>
    <property type="project" value="UniProtKB-UniRule"/>
</dbReference>
<dbReference type="HAMAP" id="MF_01950">
    <property type="entry name" value="AcpH"/>
    <property type="match status" value="1"/>
</dbReference>
<dbReference type="InterPro" id="IPR007431">
    <property type="entry name" value="ACP_PD"/>
</dbReference>
<dbReference type="InterPro" id="IPR023491">
    <property type="entry name" value="ACP_phosphodiesterase_gpbac"/>
</dbReference>
<dbReference type="NCBIfam" id="NF007466">
    <property type="entry name" value="PRK10045.1"/>
    <property type="match status" value="1"/>
</dbReference>
<dbReference type="PANTHER" id="PTHR38764">
    <property type="entry name" value="ACYL CARRIER PROTEIN PHOSPHODIESTERASE"/>
    <property type="match status" value="1"/>
</dbReference>
<dbReference type="PANTHER" id="PTHR38764:SF1">
    <property type="entry name" value="ACYL CARRIER PROTEIN PHOSPHODIESTERASE"/>
    <property type="match status" value="1"/>
</dbReference>
<dbReference type="Pfam" id="PF04336">
    <property type="entry name" value="ACP_PD"/>
    <property type="match status" value="1"/>
</dbReference>
<dbReference type="PIRSF" id="PIRSF011489">
    <property type="entry name" value="DUF479"/>
    <property type="match status" value="1"/>
</dbReference>